<organism>
    <name type="scientific">Photorhabdus laumondii subsp. laumondii (strain DSM 15139 / CIP 105565 / TT01)</name>
    <name type="common">Photorhabdus luminescens subsp. laumondii</name>
    <dbReference type="NCBI Taxonomy" id="243265"/>
    <lineage>
        <taxon>Bacteria</taxon>
        <taxon>Pseudomonadati</taxon>
        <taxon>Pseudomonadota</taxon>
        <taxon>Gammaproteobacteria</taxon>
        <taxon>Enterobacterales</taxon>
        <taxon>Morganellaceae</taxon>
        <taxon>Photorhabdus</taxon>
    </lineage>
</organism>
<keyword id="KW-1185">Reference proteome</keyword>
<keyword id="KW-0687">Ribonucleoprotein</keyword>
<keyword id="KW-0689">Ribosomal protein</keyword>
<dbReference type="EMBL" id="BX571872">
    <property type="protein sequence ID" value="CAE16387.1"/>
    <property type="molecule type" value="Genomic_DNA"/>
</dbReference>
<dbReference type="RefSeq" id="WP_011148147.1">
    <property type="nucleotide sequence ID" value="NC_005126.1"/>
</dbReference>
<dbReference type="SMR" id="Q7N078"/>
<dbReference type="STRING" id="243265.plu4015"/>
<dbReference type="GeneID" id="48850240"/>
<dbReference type="KEGG" id="plu:plu4015"/>
<dbReference type="eggNOG" id="COG0102">
    <property type="taxonomic scope" value="Bacteria"/>
</dbReference>
<dbReference type="HOGENOM" id="CLU_082184_2_2_6"/>
<dbReference type="OrthoDB" id="9801330at2"/>
<dbReference type="Proteomes" id="UP000002514">
    <property type="component" value="Chromosome"/>
</dbReference>
<dbReference type="GO" id="GO:0022625">
    <property type="term" value="C:cytosolic large ribosomal subunit"/>
    <property type="evidence" value="ECO:0007669"/>
    <property type="project" value="TreeGrafter"/>
</dbReference>
<dbReference type="GO" id="GO:0003729">
    <property type="term" value="F:mRNA binding"/>
    <property type="evidence" value="ECO:0007669"/>
    <property type="project" value="TreeGrafter"/>
</dbReference>
<dbReference type="GO" id="GO:0003735">
    <property type="term" value="F:structural constituent of ribosome"/>
    <property type="evidence" value="ECO:0007669"/>
    <property type="project" value="InterPro"/>
</dbReference>
<dbReference type="GO" id="GO:0017148">
    <property type="term" value="P:negative regulation of translation"/>
    <property type="evidence" value="ECO:0007669"/>
    <property type="project" value="TreeGrafter"/>
</dbReference>
<dbReference type="GO" id="GO:0006412">
    <property type="term" value="P:translation"/>
    <property type="evidence" value="ECO:0007669"/>
    <property type="project" value="UniProtKB-UniRule"/>
</dbReference>
<dbReference type="CDD" id="cd00392">
    <property type="entry name" value="Ribosomal_L13"/>
    <property type="match status" value="1"/>
</dbReference>
<dbReference type="FunFam" id="3.90.1180.10:FF:000001">
    <property type="entry name" value="50S ribosomal protein L13"/>
    <property type="match status" value="1"/>
</dbReference>
<dbReference type="Gene3D" id="3.90.1180.10">
    <property type="entry name" value="Ribosomal protein L13"/>
    <property type="match status" value="1"/>
</dbReference>
<dbReference type="HAMAP" id="MF_01366">
    <property type="entry name" value="Ribosomal_uL13"/>
    <property type="match status" value="1"/>
</dbReference>
<dbReference type="InterPro" id="IPR005822">
    <property type="entry name" value="Ribosomal_uL13"/>
</dbReference>
<dbReference type="InterPro" id="IPR005823">
    <property type="entry name" value="Ribosomal_uL13_bac-type"/>
</dbReference>
<dbReference type="InterPro" id="IPR023563">
    <property type="entry name" value="Ribosomal_uL13_CS"/>
</dbReference>
<dbReference type="InterPro" id="IPR036899">
    <property type="entry name" value="Ribosomal_uL13_sf"/>
</dbReference>
<dbReference type="NCBIfam" id="TIGR01066">
    <property type="entry name" value="rplM_bact"/>
    <property type="match status" value="1"/>
</dbReference>
<dbReference type="PANTHER" id="PTHR11545:SF2">
    <property type="entry name" value="LARGE RIBOSOMAL SUBUNIT PROTEIN UL13M"/>
    <property type="match status" value="1"/>
</dbReference>
<dbReference type="PANTHER" id="PTHR11545">
    <property type="entry name" value="RIBOSOMAL PROTEIN L13"/>
    <property type="match status" value="1"/>
</dbReference>
<dbReference type="Pfam" id="PF00572">
    <property type="entry name" value="Ribosomal_L13"/>
    <property type="match status" value="1"/>
</dbReference>
<dbReference type="PIRSF" id="PIRSF002181">
    <property type="entry name" value="Ribosomal_L13"/>
    <property type="match status" value="1"/>
</dbReference>
<dbReference type="SUPFAM" id="SSF52161">
    <property type="entry name" value="Ribosomal protein L13"/>
    <property type="match status" value="1"/>
</dbReference>
<dbReference type="PROSITE" id="PS00783">
    <property type="entry name" value="RIBOSOMAL_L13"/>
    <property type="match status" value="1"/>
</dbReference>
<comment type="function">
    <text evidence="1">This protein is one of the early assembly proteins of the 50S ribosomal subunit, although it is not seen to bind rRNA by itself. It is important during the early stages of 50S assembly.</text>
</comment>
<comment type="subunit">
    <text evidence="1">Part of the 50S ribosomal subunit.</text>
</comment>
<comment type="similarity">
    <text evidence="1">Belongs to the universal ribosomal protein uL13 family.</text>
</comment>
<proteinExistence type="inferred from homology"/>
<feature type="chain" id="PRO_0000261765" description="Large ribosomal subunit protein uL13">
    <location>
        <begin position="1"/>
        <end position="142"/>
    </location>
</feature>
<sequence>MKTFTAKPETVKRDWYVVDADGKTLGRLATEVARRLRGKHKAEYTPHVDTGDYIIIVNAEKVAVTGNKRSDKIYYHHTGHIGGIKQATFEEMIARRPERVIEIAVKGMLPKGPLGRAMYRKLKVYAGSEHNHAAQQPQVLDI</sequence>
<reference key="1">
    <citation type="journal article" date="2003" name="Nat. Biotechnol.">
        <title>The genome sequence of the entomopathogenic bacterium Photorhabdus luminescens.</title>
        <authorList>
            <person name="Duchaud E."/>
            <person name="Rusniok C."/>
            <person name="Frangeul L."/>
            <person name="Buchrieser C."/>
            <person name="Givaudan A."/>
            <person name="Taourit S."/>
            <person name="Bocs S."/>
            <person name="Boursaux-Eude C."/>
            <person name="Chandler M."/>
            <person name="Charles J.-F."/>
            <person name="Dassa E."/>
            <person name="Derose R."/>
            <person name="Derzelle S."/>
            <person name="Freyssinet G."/>
            <person name="Gaudriault S."/>
            <person name="Medigue C."/>
            <person name="Lanois A."/>
            <person name="Powell K."/>
            <person name="Siguier P."/>
            <person name="Vincent R."/>
            <person name="Wingate V."/>
            <person name="Zouine M."/>
            <person name="Glaser P."/>
            <person name="Boemare N."/>
            <person name="Danchin A."/>
            <person name="Kunst F."/>
        </authorList>
    </citation>
    <scope>NUCLEOTIDE SEQUENCE [LARGE SCALE GENOMIC DNA]</scope>
    <source>
        <strain>DSM 15139 / CIP 105565 / TT01</strain>
    </source>
</reference>
<evidence type="ECO:0000255" key="1">
    <source>
        <dbReference type="HAMAP-Rule" id="MF_01366"/>
    </source>
</evidence>
<evidence type="ECO:0000305" key="2"/>
<gene>
    <name evidence="1" type="primary">rplM</name>
    <name type="ordered locus">plu4015</name>
</gene>
<protein>
    <recommendedName>
        <fullName evidence="1">Large ribosomal subunit protein uL13</fullName>
    </recommendedName>
    <alternativeName>
        <fullName evidence="2">50S ribosomal protein L13</fullName>
    </alternativeName>
</protein>
<name>RL13_PHOLL</name>
<accession>Q7N078</accession>